<comment type="function">
    <text evidence="6 7 14 15 16 18 19 20 21">RuBisCO catalyzes two reactions: the carboxylation of D-ribulose 1,5-bisphosphate, the primary event in carbon dioxide fixation, as well as the oxidative fragmentation of the pentose substrate in the photorespiration process (Probable) (PubMed:2928307). Both reactions occur simultaneously and in competition at the same active site (Probable). Binds to abscisic acid (ABA) which has weakly inhibits carboxylation and more strongly inhibits enzyme activation (PubMed:26197050).</text>
</comment>
<comment type="catalytic activity">
    <reaction evidence="2 6 14 15 16 18 19 20 21">
        <text>2 (2R)-3-phosphoglycerate + 2 H(+) = D-ribulose 1,5-bisphosphate + CO2 + H2O</text>
        <dbReference type="Rhea" id="RHEA:23124"/>
        <dbReference type="ChEBI" id="CHEBI:15377"/>
        <dbReference type="ChEBI" id="CHEBI:15378"/>
        <dbReference type="ChEBI" id="CHEBI:16526"/>
        <dbReference type="ChEBI" id="CHEBI:57870"/>
        <dbReference type="ChEBI" id="CHEBI:58272"/>
        <dbReference type="EC" id="4.1.1.39"/>
    </reaction>
</comment>
<comment type="catalytic activity">
    <reaction evidence="2 14 15 16 17 18 19 20 21">
        <text>D-ribulose 1,5-bisphosphate + O2 = 2-phosphoglycolate + (2R)-3-phosphoglycerate + 2 H(+)</text>
        <dbReference type="Rhea" id="RHEA:36631"/>
        <dbReference type="ChEBI" id="CHEBI:15378"/>
        <dbReference type="ChEBI" id="CHEBI:15379"/>
        <dbReference type="ChEBI" id="CHEBI:57870"/>
        <dbReference type="ChEBI" id="CHEBI:58033"/>
        <dbReference type="ChEBI" id="CHEBI:58272"/>
    </reaction>
</comment>
<comment type="cofactor">
    <cofactor evidence="5 9 12">
        <name>Mg(2+)</name>
        <dbReference type="ChEBI" id="CHEBI:18420"/>
    </cofactor>
    <text evidence="3 5 9 11 12">Binds 1 Mg(2+) ion per subunit (PubMed:2118958, PubMed:8648644, PubMed:9092835). Ca(2+) can substitute but is not catalytically competent (PubMed:14596800, PubMed:9034362).</text>
</comment>
<comment type="activity regulation">
    <text evidence="6">Abscisic acid (ABA) causes weak inhibition of RuBisCO catalytic activity, but more potent inhibition of RuBisCO activation.</text>
</comment>
<comment type="subunit">
    <text evidence="3 4 5 9 10 11 12">Heterohexadecamer of 8 large chains and 8 small chains.</text>
</comment>
<comment type="subcellular location">
    <subcellularLocation>
        <location evidence="2">Plastid</location>
        <location evidence="2">Chloroplast</location>
    </subcellularLocation>
</comment>
<comment type="PTM">
    <text evidence="1 13">The disulfide bond which can form between Cys-247 in the large chain dimeric partners within the hexadecamer appears to be associated with oxidative stress and protein turnover (By similarity). The disulfide bonds reported in 1RBO may be the result of oxidation during crystallization.</text>
</comment>
<comment type="miscellaneous">
    <text evidence="2">The basic functional RuBisCO is composed of a large chain homodimer in a 'head-to-tail' conformation. In form I RuBisCO this homodimer is arranged in a barrel-like tetramer with the small subunits forming a tetrameric 'cap' on each end of the 'barrel'.</text>
</comment>
<comment type="similarity">
    <text evidence="2">Belongs to the RuBisCO large chain family. Type I subfamily.</text>
</comment>
<comment type="online information" name="Protein Spotlight">
    <link uri="https://www.proteinspotlight.org/back_issues/038"/>
    <text>The Plant Kingdom's sloth - Issue 38 of September 2003</text>
</comment>
<proteinExistence type="evidence at protein level"/>
<sequence length="475" mass="52740">MSPQTETKASVEFKAGVKDYKLTYYTPEYETLDTDILAAFRVSPQPGVPPEEAGAAVAAESSTGTWTTVWTDGLTNLDRYKGRCYHIEPVAGEENQYICYVAYPLDLFEEGSVTNMFTSIVGNVFGFKALRALRLEDLRIPVAYVKTFQGPPHGIQVERDKLNKYGRPLLGCTIKPKLGLSAKNYGRAVYECLRGGLDFTKDDENVNSQPFMRWRDRFLFCAEALYKAQAETGEIKGHYLNATAGTCEDMMKRAVFARELGVPIVMHDYLTGGFTANTTLSHYCRDNGLLLHIHRAMHAVIDRQKNHGMHFRVLAKALRLSGGDHIHSGTVVGKLEGERDITLGFVDLLRDDYTEKDRSRGIYFTQSWVSTPGVLPVASGGIHVWHMPALTEIFGDDSVLQFGGGTLGHPWGNAPGAVANRVALEACVQARNEGRDLAREGNTIIREATKWSPELAAACEVWKEIKFEFPAMDTV</sequence>
<feature type="propeptide" id="PRO_0000031415" evidence="7">
    <location>
        <begin position="1"/>
        <end position="2"/>
    </location>
</feature>
<feature type="chain" id="PRO_0000031416" description="Ribulose bisphosphate carboxylase large chain">
    <location>
        <begin position="3"/>
        <end position="475"/>
    </location>
</feature>
<feature type="active site" description="Proton acceptor" evidence="5 8 21">
    <location>
        <position position="175"/>
    </location>
</feature>
<feature type="active site" description="Proton acceptor" evidence="8">
    <location>
        <position position="294"/>
    </location>
</feature>
<feature type="binding site" evidence="11 26">
    <location>
        <position position="65"/>
    </location>
    <ligand>
        <name>substrate</name>
    </ligand>
</feature>
<feature type="binding site" description="in homodimeric partner" evidence="11 26">
    <location>
        <position position="123"/>
    </location>
    <ligand>
        <name>substrate</name>
    </ligand>
</feature>
<feature type="binding site">
    <location>
        <position position="173"/>
    </location>
    <ligand>
        <name>substrate</name>
    </ligand>
</feature>
<feature type="binding site">
    <location>
        <position position="177"/>
    </location>
    <ligand>
        <name>substrate</name>
    </ligand>
</feature>
<feature type="binding site" description="via carbamate group" evidence="9 12 14 16 20">
    <location>
        <position position="201"/>
    </location>
    <ligand>
        <name>Mg(2+)</name>
        <dbReference type="ChEBI" id="CHEBI:18420"/>
    </ligand>
</feature>
<feature type="binding site" evidence="9 12 14 16 20">
    <location>
        <position position="203"/>
    </location>
    <ligand>
        <name>Mg(2+)</name>
        <dbReference type="ChEBI" id="CHEBI:18420"/>
    </ligand>
</feature>
<feature type="binding site" evidence="9 12 14 16 20">
    <location>
        <position position="204"/>
    </location>
    <ligand>
        <name>Mg(2+)</name>
        <dbReference type="ChEBI" id="CHEBI:18420"/>
    </ligand>
</feature>
<feature type="binding site" evidence="11 26">
    <location>
        <position position="204"/>
    </location>
    <ligand>
        <name>substrate</name>
    </ligand>
</feature>
<feature type="binding site" evidence="11 26">
    <location>
        <position position="294"/>
    </location>
    <ligand>
        <name>substrate</name>
    </ligand>
</feature>
<feature type="binding site" evidence="11 27">
    <location>
        <position position="295"/>
    </location>
    <ligand>
        <name>substrate</name>
    </ligand>
</feature>
<feature type="binding site" evidence="11 26">
    <location>
        <position position="327"/>
    </location>
    <ligand>
        <name>substrate</name>
    </ligand>
</feature>
<feature type="binding site" evidence="11 26">
    <location>
        <position position="334"/>
    </location>
    <ligand>
        <name>substrate</name>
    </ligand>
</feature>
<feature type="binding site">
    <location>
        <position position="379"/>
    </location>
    <ligand>
        <name>substrate</name>
    </ligand>
</feature>
<feature type="binding site" evidence="11 26 27">
    <location>
        <position position="381"/>
    </location>
    <ligand>
        <name>substrate</name>
    </ligand>
</feature>
<feature type="binding site" evidence="11 26 27">
    <location>
        <position position="403"/>
    </location>
    <ligand>
        <name>substrate</name>
    </ligand>
</feature>
<feature type="binding site" evidence="11 26 27">
    <location>
        <position position="404"/>
    </location>
    <ligand>
        <name>substrate</name>
    </ligand>
</feature>
<feature type="site" description="Not N6-methylated" evidence="7">
    <location>
        <position position="14"/>
    </location>
</feature>
<feature type="site" description="Transition state stabilizer" evidence="19">
    <location>
        <position position="334"/>
    </location>
</feature>
<feature type="modified residue" description="N-acetylproline" evidence="7">
    <location>
        <position position="3"/>
    </location>
</feature>
<feature type="modified residue" description="N6-carboxylysine" evidence="3 5 9 11 12">
    <location>
        <position position="201"/>
    </location>
</feature>
<feature type="disulfide bond" description="Interchain; in linked form" evidence="2">
    <location>
        <position position="247"/>
    </location>
</feature>
<feature type="sequence conflict" description="In Ref. 2; CAB88737." evidence="13" ref="2">
    <original>E</original>
    <variation>G</variation>
    <location>
        <position position="12"/>
    </location>
</feature>
<feature type="helix" evidence="32">
    <location>
        <begin position="21"/>
        <end position="24"/>
    </location>
</feature>
<feature type="strand" evidence="32">
    <location>
        <begin position="36"/>
        <end position="44"/>
    </location>
</feature>
<feature type="helix" evidence="32">
    <location>
        <begin position="50"/>
        <end position="59"/>
    </location>
</feature>
<feature type="turn" evidence="32">
    <location>
        <begin position="60"/>
        <end position="63"/>
    </location>
</feature>
<feature type="strand" evidence="31">
    <location>
        <begin position="66"/>
        <end position="68"/>
    </location>
</feature>
<feature type="helix" evidence="32">
    <location>
        <begin position="70"/>
        <end position="74"/>
    </location>
</feature>
<feature type="helix" evidence="32">
    <location>
        <begin position="77"/>
        <end position="80"/>
    </location>
</feature>
<feature type="strand" evidence="32">
    <location>
        <begin position="83"/>
        <end position="89"/>
    </location>
</feature>
<feature type="strand" evidence="30">
    <location>
        <begin position="93"/>
        <end position="95"/>
    </location>
</feature>
<feature type="strand" evidence="32">
    <location>
        <begin position="97"/>
        <end position="103"/>
    </location>
</feature>
<feature type="helix" evidence="32">
    <location>
        <begin position="105"/>
        <end position="107"/>
    </location>
</feature>
<feature type="helix" evidence="32">
    <location>
        <begin position="113"/>
        <end position="121"/>
    </location>
</feature>
<feature type="helix" evidence="32">
    <location>
        <begin position="124"/>
        <end position="126"/>
    </location>
</feature>
<feature type="strand" evidence="32">
    <location>
        <begin position="130"/>
        <end position="139"/>
    </location>
</feature>
<feature type="helix" evidence="32">
    <location>
        <begin position="142"/>
        <end position="145"/>
    </location>
</feature>
<feature type="helix" evidence="32">
    <location>
        <begin position="155"/>
        <end position="162"/>
    </location>
</feature>
<feature type="strand" evidence="32">
    <location>
        <begin position="169"/>
        <end position="171"/>
    </location>
</feature>
<feature type="strand" evidence="32">
    <location>
        <begin position="175"/>
        <end position="178"/>
    </location>
</feature>
<feature type="helix" evidence="32">
    <location>
        <begin position="182"/>
        <end position="194"/>
    </location>
</feature>
<feature type="strand" evidence="32">
    <location>
        <begin position="198"/>
        <end position="201"/>
    </location>
</feature>
<feature type="strand" evidence="32">
    <location>
        <begin position="207"/>
        <end position="209"/>
    </location>
</feature>
<feature type="helix" evidence="32">
    <location>
        <begin position="214"/>
        <end position="232"/>
    </location>
</feature>
<feature type="strand" evidence="32">
    <location>
        <begin position="237"/>
        <end position="241"/>
    </location>
</feature>
<feature type="helix" evidence="32">
    <location>
        <begin position="247"/>
        <end position="260"/>
    </location>
</feature>
<feature type="strand" evidence="32">
    <location>
        <begin position="263"/>
        <end position="268"/>
    </location>
</feature>
<feature type="helix" evidence="32">
    <location>
        <begin position="269"/>
        <end position="272"/>
    </location>
</feature>
<feature type="helix" evidence="32">
    <location>
        <begin position="274"/>
        <end position="287"/>
    </location>
</feature>
<feature type="strand" evidence="32">
    <location>
        <begin position="290"/>
        <end position="294"/>
    </location>
</feature>
<feature type="helix" evidence="32">
    <location>
        <begin position="298"/>
        <end position="302"/>
    </location>
</feature>
<feature type="strand" evidence="32">
    <location>
        <begin position="305"/>
        <end position="309"/>
    </location>
</feature>
<feature type="helix" evidence="32">
    <location>
        <begin position="311"/>
        <end position="321"/>
    </location>
</feature>
<feature type="strand" evidence="32">
    <location>
        <begin position="324"/>
        <end position="327"/>
    </location>
</feature>
<feature type="strand" evidence="32">
    <location>
        <begin position="331"/>
        <end position="335"/>
    </location>
</feature>
<feature type="helix" evidence="32">
    <location>
        <begin position="339"/>
        <end position="350"/>
    </location>
</feature>
<feature type="strand" evidence="32">
    <location>
        <begin position="352"/>
        <end position="354"/>
    </location>
</feature>
<feature type="helix" evidence="32">
    <location>
        <begin position="358"/>
        <end position="360"/>
    </location>
</feature>
<feature type="strand" evidence="32">
    <location>
        <begin position="375"/>
        <end position="381"/>
    </location>
</feature>
<feature type="helix" evidence="32">
    <location>
        <begin position="384"/>
        <end position="386"/>
    </location>
</feature>
<feature type="helix" evidence="32">
    <location>
        <begin position="387"/>
        <end position="394"/>
    </location>
</feature>
<feature type="strand" evidence="32">
    <location>
        <begin position="396"/>
        <end position="401"/>
    </location>
</feature>
<feature type="helix" evidence="32">
    <location>
        <begin position="404"/>
        <end position="407"/>
    </location>
</feature>
<feature type="helix" evidence="32">
    <location>
        <begin position="413"/>
        <end position="432"/>
    </location>
</feature>
<feature type="helix" evidence="32">
    <location>
        <begin position="437"/>
        <end position="448"/>
    </location>
</feature>
<feature type="turn" evidence="32">
    <location>
        <begin position="449"/>
        <end position="451"/>
    </location>
</feature>
<feature type="helix" evidence="32">
    <location>
        <begin position="453"/>
        <end position="462"/>
    </location>
</feature>
<gene>
    <name evidence="2" type="primary">rbcL</name>
</gene>
<organism>
    <name type="scientific">Spinacia oleracea</name>
    <name type="common">Spinach</name>
    <dbReference type="NCBI Taxonomy" id="3562"/>
    <lineage>
        <taxon>Eukaryota</taxon>
        <taxon>Viridiplantae</taxon>
        <taxon>Streptophyta</taxon>
        <taxon>Embryophyta</taxon>
        <taxon>Tracheophyta</taxon>
        <taxon>Spermatophyta</taxon>
        <taxon>Magnoliopsida</taxon>
        <taxon>eudicotyledons</taxon>
        <taxon>Gunneridae</taxon>
        <taxon>Pentapetalae</taxon>
        <taxon>Caryophyllales</taxon>
        <taxon>Chenopodiaceae</taxon>
        <taxon>Chenopodioideae</taxon>
        <taxon>Anserineae</taxon>
        <taxon>Spinacia</taxon>
    </lineage>
</organism>
<protein>
    <recommendedName>
        <fullName evidence="2">Ribulose bisphosphate carboxylase large chain</fullName>
        <shortName evidence="2">RuBisCO large subunit</shortName>
        <ecNumber evidence="2">4.1.1.39</ecNumber>
    </recommendedName>
</protein>
<geneLocation type="chloroplast"/>
<evidence type="ECO:0000250" key="1">
    <source>
        <dbReference type="UniProtKB" id="P11383"/>
    </source>
</evidence>
<evidence type="ECO:0000255" key="2">
    <source>
        <dbReference type="HAMAP-Rule" id="MF_01338"/>
    </source>
</evidence>
<evidence type="ECO:0000269" key="3">
    <source>
    </source>
</evidence>
<evidence type="ECO:0000269" key="4">
    <source>
    </source>
</evidence>
<evidence type="ECO:0000269" key="5">
    <source>
    </source>
</evidence>
<evidence type="ECO:0000269" key="6">
    <source>
    </source>
</evidence>
<evidence type="ECO:0000269" key="7">
    <source>
    </source>
</evidence>
<evidence type="ECO:0000269" key="8">
    <source>
    </source>
</evidence>
<evidence type="ECO:0000269" key="9">
    <source>
    </source>
</evidence>
<evidence type="ECO:0000269" key="10">
    <source>
    </source>
</evidence>
<evidence type="ECO:0000269" key="11">
    <source>
    </source>
</evidence>
<evidence type="ECO:0000269" key="12">
    <source>
    </source>
</evidence>
<evidence type="ECO:0000305" key="13"/>
<evidence type="ECO:0000305" key="14">
    <source>
    </source>
</evidence>
<evidence type="ECO:0000305" key="15">
    <source>
    </source>
</evidence>
<evidence type="ECO:0000305" key="16">
    <source>
    </source>
</evidence>
<evidence type="ECO:0000305" key="17">
    <source>
    </source>
</evidence>
<evidence type="ECO:0000305" key="18">
    <source>
    </source>
</evidence>
<evidence type="ECO:0000305" key="19">
    <source>
    </source>
</evidence>
<evidence type="ECO:0000305" key="20">
    <source>
    </source>
</evidence>
<evidence type="ECO:0000305" key="21">
    <source>
    </source>
</evidence>
<evidence type="ECO:0007744" key="22">
    <source>
        <dbReference type="PDB" id="1AA1"/>
    </source>
</evidence>
<evidence type="ECO:0007744" key="23">
    <source>
        <dbReference type="PDB" id="1AUS"/>
    </source>
</evidence>
<evidence type="ECO:0007744" key="24">
    <source>
        <dbReference type="PDB" id="1RBO"/>
    </source>
</evidence>
<evidence type="ECO:0007744" key="25">
    <source>
        <dbReference type="PDB" id="1RCO"/>
    </source>
</evidence>
<evidence type="ECO:0007744" key="26">
    <source>
        <dbReference type="PDB" id="1RCX"/>
    </source>
</evidence>
<evidence type="ECO:0007744" key="27">
    <source>
        <dbReference type="PDB" id="1RXO"/>
    </source>
</evidence>
<evidence type="ECO:0007744" key="28">
    <source>
        <dbReference type="PDB" id="1UPM"/>
    </source>
</evidence>
<evidence type="ECO:0007744" key="29">
    <source>
        <dbReference type="PDB" id="1UPP"/>
    </source>
</evidence>
<evidence type="ECO:0007829" key="30">
    <source>
        <dbReference type="PDB" id="1RBO"/>
    </source>
</evidence>
<evidence type="ECO:0007829" key="31">
    <source>
        <dbReference type="PDB" id="1UPP"/>
    </source>
</evidence>
<evidence type="ECO:0007829" key="32">
    <source>
        <dbReference type="PDB" id="8RUC"/>
    </source>
</evidence>
<name>RBL_SPIOL</name>
<reference key="1">
    <citation type="journal article" date="1981" name="Nucleic Acids Res.">
        <title>The structure of the gene for the large subunit of ribulose 1,5-bisphosphate carboxylase from spinach chloroplast DNA.</title>
        <authorList>
            <person name="Zurawski G."/>
            <person name="Perrot B."/>
            <person name="Bottomley W."/>
            <person name="Whitfeld P.R."/>
        </authorList>
    </citation>
    <scope>NUCLEOTIDE SEQUENCE [GENOMIC DNA]</scope>
</reference>
<reference key="2">
    <citation type="journal article" date="2001" name="Plant Mol. Biol.">
        <title>The plastid chromosome of spinach (Spinacia oleracea): complete nucleotide sequence and gene organization.</title>
        <authorList>
            <person name="Schmitz-Linneweber C."/>
            <person name="Maier R.M."/>
            <person name="Alcaraz J.-P."/>
            <person name="Cottet A."/>
            <person name="Herrmann R.G."/>
            <person name="Mache R."/>
        </authorList>
    </citation>
    <scope>NUCLEOTIDE SEQUENCE [LARGE SCALE GENOMIC DNA]</scope>
    <source>
        <strain>cv. Geant d'hiver</strain>
        <strain>cv. Monatol</strain>
    </source>
</reference>
<reference key="3">
    <citation type="journal article" date="1989" name="Proc. Natl. Acad. Sci. U.S.A.">
        <title>Post-translational modifications in the large subunit of ribulose bisphosphate carboxylase/oxygenase.</title>
        <authorList>
            <person name="Houtz R.L."/>
            <person name="Stults J.T."/>
            <person name="Mulligan R.M."/>
            <person name="Tolbert N.E."/>
        </authorList>
    </citation>
    <scope>PROTEIN SEQUENCE OF 3-18</scope>
    <scope>FUNCTION</scope>
    <scope>ACETYLATION AT PRO-3</scope>
    <scope>LACK OF METHYLATION</scope>
</reference>
<reference key="4">
    <citation type="journal article" date="1988" name="Proc. Natl. Acad. Sci. U.S.A.">
        <title>Reaction-intermediate analogue binding by ribulose bisphosphate carboxylase/oxygenase causes specific changes in proteolytic sensitivity: the amino-terminal residue of the large subunit is acetylated proline.</title>
        <authorList>
            <person name="Mulligan R.M."/>
            <person name="Houtz R.L."/>
            <person name="Tolbert N.E."/>
        </authorList>
    </citation>
    <scope>PROTEIN SEQUENCE OF 8-14 AND 466-475</scope>
</reference>
<reference key="5">
    <citation type="journal article" date="1978" name="Biochem. Biophys. Res. Commun.">
        <title>Sequences of two active-site peptides from spinach ribulosebisphosphate carboxylase/oxygenase.</title>
        <authorList>
            <person name="Stringer C.D."/>
            <person name="Hartman F.C."/>
        </authorList>
    </citation>
    <scope>PROTEIN SEQUENCE OF 165-177 AND 320-339</scope>
    <scope>ACTIVE SITE</scope>
</reference>
<reference key="6">
    <citation type="submission" date="1982-10" db="PIR data bank">
        <authorList>
            <person name="Lorimer G.H."/>
        </authorList>
    </citation>
    <scope>ACTIVATION</scope>
</reference>
<reference key="7">
    <citation type="journal article" date="2015" name="PLoS ONE">
        <title>Identification of Interactions between Abscisic Acid and Ribulose-1,5-Bisphosphate Carboxylase/Oxygenase.</title>
        <authorList>
            <person name="Galka M.M."/>
            <person name="Rajagopalan N."/>
            <person name="Buhrow L.M."/>
            <person name="Nelson K.M."/>
            <person name="Switala J."/>
            <person name="Cutler A.J."/>
            <person name="Palmer D.R."/>
            <person name="Loewen P.C."/>
            <person name="Abrams S.R."/>
            <person name="Loewen M.C."/>
        </authorList>
    </citation>
    <scope>FUNCTION</scope>
    <scope>ACTIVITY REGULATION</scope>
    <scope>INTERACTION WITH ABSCISIC ACID</scope>
</reference>
<reference key="8">
    <citation type="journal article" date="1989" name="Science">
        <title>Reexamination of the three-dimensional structure of the small subunit of RuBisCo from higher plants.</title>
        <authorList>
            <person name="Knight S."/>
            <person name="Andersson I."/>
            <person name="Braenden C.-I."/>
        </authorList>
    </citation>
    <scope>X-RAY CRYSTALLOGRAPHY (2.8 ANGSTROMS) OF ACTIVATED HOLOENZYME IN COMPLEX WITH TRANSITION-STATE ANALOG</scope>
    <scope>SUBUNIT</scope>
</reference>
<reference key="9">
    <citation type="journal article" date="1990" name="J. Mol. Biol.">
        <title>Crystallographic analysis of ribulose 1,5-bisphosphate carboxylase from spinach at 2.4-A resolution. Subunit interactions and active site.</title>
        <authorList>
            <person name="Knight S."/>
            <person name="Andersson I."/>
            <person name="Braenden C.-I."/>
        </authorList>
    </citation>
    <scope>X-RAY CRYSTALLOGRAPHY (2.4 ANGSTROMS) OF ACTIVATED HOLOENZYME IN COMPLEX WITH TRANSITION-STATE ANALOG 2-CABP AND MAGNESIUM</scope>
    <scope>ACTIVE SITE</scope>
    <scope>SUBUNIT</scope>
    <scope>CARBOXYLATION AT LYS-201</scope>
</reference>
<reference key="10">
    <citation type="journal article" date="1996" name="J. Mol. Biol.">
        <title>Large structures at high resolution: the 1.6-A crystal structure of spinach ribulose-1,5-bisphosphate carboxylase/oxygenase complexed with 2-carboxyarabinitol bisphosphate.</title>
        <authorList>
            <person name="Andersson I."/>
        </authorList>
    </citation>
    <scope>X-RAY CRYSTALLOGRAPHY (1.6 ANGSTROMS) OF ACTIVATED HOLOENZYME IN COMPLEX WITH TRANSITION-STATE ANALOG 2-CABP AND MAGNESIUM</scope>
    <scope>SUBUNIT</scope>
    <scope>CARBOXYLATION AT LYS-201</scope>
</reference>
<reference evidence="24 25" key="11">
    <citation type="journal article" date="1996" name="J. Biol. Chem.">
        <title>A common structural basis for the inhibition of ribulose 1,5-bisphosphate carboxylase by 4-carboxyarabinitol 1,5-bisphosphate and xylulose 1,5-bisphosphate.</title>
        <authorList>
            <person name="Taylor T.C."/>
            <person name="Fothergill M.D."/>
            <person name="Andersson I."/>
        </authorList>
    </citation>
    <scope>X-RAY CRYSTALLOGRAPHY (2.3 ANGSTROMS) OF INACTIVE HOLOENZYME IN COMPLEX WITH INHIBITORS 4-CABP AND XUBP</scope>
    <scope>SUBUNIT</scope>
</reference>
<reference evidence="22 23" key="12">
    <citation type="journal article" date="1997" name="Biochemistry">
        <title>Structure of a product complex of spinach ribulose-1,5-bisphosphate carboxylase/oxygenase.</title>
        <authorList>
            <person name="Taylor T.C."/>
            <person name="Andersson I."/>
        </authorList>
    </citation>
    <scope>X-RAY CRYSTALLOGRAPHY (2.2 ANGSTROMS) OF ACTIVATED HOLOENZYME IN COMPLEX WITH 3-PHOSPHOGLYCERATE AND MAGNESIUM</scope>
    <scope>SUBUNIT</scope>
    <scope>CARBOXYLATION AT LYS-201</scope>
</reference>
<reference evidence="26 27" key="13">
    <citation type="journal article" date="1997" name="J. Mol. Biol.">
        <title>The structure of the complex between rubisco and its natural substrate ribulose 1,5-bisphosphate.</title>
        <authorList>
            <person name="Taylor T.C."/>
            <person name="Andersson I."/>
        </authorList>
    </citation>
    <scope>X-RAY CRYSTALLOGRAPHY (2.2 ANGSTROMS) OF HOLOENZYME IN COMPLEX WITH SUBSTRATE AND CALCIUM IN ACTIVATED AND INACTIVATED STATE</scope>
    <scope>SUBUNIT</scope>
    <scope>CARBOXYLATION AT LYS-201</scope>
</reference>
<reference evidence="28 29" key="14">
    <citation type="journal article" date="2003" name="J. Mol. Biol.">
        <title>Calcium supports loop closure but not catalysis in Rubisco.</title>
        <authorList>
            <person name="Karkehabadi S."/>
            <person name="Taylor T.C."/>
            <person name="Andersson I."/>
        </authorList>
    </citation>
    <scope>X-RAY CRYSTALLOGRAPHY (2.3 ANGSTROMS) OF HOLOENZYME IN COMPLEX WITH TRANSITION STATE ANALOG 2-CABP AND CALCIUM</scope>
    <scope>SUBUNIT</scope>
    <scope>CARBOXYLATION AT LYS-201</scope>
</reference>
<dbReference type="EC" id="4.1.1.39" evidence="2"/>
<dbReference type="EMBL" id="V00168">
    <property type="protein sequence ID" value="CAA23473.1"/>
    <property type="molecule type" value="Genomic_DNA"/>
</dbReference>
<dbReference type="EMBL" id="AJ400848">
    <property type="protein sequence ID" value="CAB88737.1"/>
    <property type="molecule type" value="Genomic_DNA"/>
</dbReference>
<dbReference type="PIR" id="A01094">
    <property type="entry name" value="RKSPL"/>
</dbReference>
<dbReference type="PIR" id="A28965">
    <property type="entry name" value="A28965"/>
</dbReference>
<dbReference type="RefSeq" id="NP_054944.1">
    <property type="nucleotide sequence ID" value="NC_002202.1"/>
</dbReference>
<dbReference type="PDB" id="1AA1">
    <property type="method" value="X-ray"/>
    <property type="resolution" value="2.20 A"/>
    <property type="chains" value="B/E/H/L=1-475"/>
</dbReference>
<dbReference type="PDB" id="1AUS">
    <property type="method" value="X-ray"/>
    <property type="resolution" value="2.20 A"/>
    <property type="chains" value="L/M/N/O=1-475"/>
</dbReference>
<dbReference type="PDB" id="1IR1">
    <property type="method" value="X-ray"/>
    <property type="resolution" value="1.80 A"/>
    <property type="chains" value="A/B/C/D=1-475"/>
</dbReference>
<dbReference type="PDB" id="1RBO">
    <property type="method" value="X-ray"/>
    <property type="resolution" value="2.30 A"/>
    <property type="chains" value="B/E/H/L=1-475"/>
</dbReference>
<dbReference type="PDB" id="1RCO">
    <property type="method" value="X-ray"/>
    <property type="resolution" value="2.30 A"/>
    <property type="chains" value="B/E/H/K/L/O/R/V=1-475"/>
</dbReference>
<dbReference type="PDB" id="1RCX">
    <property type="method" value="X-ray"/>
    <property type="resolution" value="2.40 A"/>
    <property type="chains" value="B/E/H/K/L/O/R/V=1-475"/>
</dbReference>
<dbReference type="PDB" id="1RXO">
    <property type="method" value="X-ray"/>
    <property type="resolution" value="2.20 A"/>
    <property type="chains" value="B/E/H/L=1-475"/>
</dbReference>
<dbReference type="PDB" id="1UPM">
    <property type="method" value="X-ray"/>
    <property type="resolution" value="2.30 A"/>
    <property type="chains" value="B/E/H/K/L/O/R/V=1-475"/>
</dbReference>
<dbReference type="PDB" id="1UPP">
    <property type="method" value="X-ray"/>
    <property type="resolution" value="2.30 A"/>
    <property type="chains" value="A/C/E/G=1-475"/>
</dbReference>
<dbReference type="PDB" id="8QJ0">
    <property type="method" value="X-ray"/>
    <property type="resolution" value="2.30 A"/>
    <property type="chains" value="L/M/N/O=1-475"/>
</dbReference>
<dbReference type="PDB" id="8RUC">
    <property type="method" value="X-ray"/>
    <property type="resolution" value="1.60 A"/>
    <property type="chains" value="A/C/E/G=1-475"/>
</dbReference>
<dbReference type="PDB" id="9CQ5">
    <property type="method" value="X-ray"/>
    <property type="resolution" value="2.50 A"/>
    <property type="chains" value="A/B/C/D/E/F/G/H=1-475"/>
</dbReference>
<dbReference type="PDBsum" id="1AA1"/>
<dbReference type="PDBsum" id="1AUS"/>
<dbReference type="PDBsum" id="1IR1"/>
<dbReference type="PDBsum" id="1RBO"/>
<dbReference type="PDBsum" id="1RCO"/>
<dbReference type="PDBsum" id="1RCX"/>
<dbReference type="PDBsum" id="1RXO"/>
<dbReference type="PDBsum" id="1UPM"/>
<dbReference type="PDBsum" id="1UPP"/>
<dbReference type="PDBsum" id="8QJ0"/>
<dbReference type="PDBsum" id="8RUC"/>
<dbReference type="PDBsum" id="9CQ5"/>
<dbReference type="SMR" id="P00875"/>
<dbReference type="DIP" id="DIP-27641N"/>
<dbReference type="FunCoup" id="P00875">
    <property type="interactions" value="374"/>
</dbReference>
<dbReference type="IntAct" id="P00875">
    <property type="interactions" value="1"/>
</dbReference>
<dbReference type="MINT" id="P00875"/>
<dbReference type="STRING" id="3562.P00875"/>
<dbReference type="Allergome" id="3814">
    <property type="allergen name" value="Spi o RuBisCO"/>
</dbReference>
<dbReference type="iPTMnet" id="P00875"/>
<dbReference type="GeneID" id="2715621"/>
<dbReference type="KEGG" id="soe:2715621"/>
<dbReference type="InParanoid" id="P00875"/>
<dbReference type="OrthoDB" id="563909at2759"/>
<dbReference type="BRENDA" id="4.1.1.39">
    <property type="organism ID" value="5812"/>
</dbReference>
<dbReference type="EvolutionaryTrace" id="P00875"/>
<dbReference type="PRO" id="PR:P00875"/>
<dbReference type="Proteomes" id="UP001155700">
    <property type="component" value="Chloroplast Pltd"/>
</dbReference>
<dbReference type="GO" id="GO:0009507">
    <property type="term" value="C:chloroplast"/>
    <property type="evidence" value="ECO:0007669"/>
    <property type="project" value="UniProtKB-SubCell"/>
</dbReference>
<dbReference type="GO" id="GO:0000287">
    <property type="term" value="F:magnesium ion binding"/>
    <property type="evidence" value="ECO:0007669"/>
    <property type="project" value="UniProtKB-UniRule"/>
</dbReference>
<dbReference type="GO" id="GO:0004497">
    <property type="term" value="F:monooxygenase activity"/>
    <property type="evidence" value="ECO:0007669"/>
    <property type="project" value="UniProtKB-KW"/>
</dbReference>
<dbReference type="GO" id="GO:0016984">
    <property type="term" value="F:ribulose-bisphosphate carboxylase activity"/>
    <property type="evidence" value="ECO:0007669"/>
    <property type="project" value="UniProtKB-UniRule"/>
</dbReference>
<dbReference type="GO" id="GO:0009853">
    <property type="term" value="P:photorespiration"/>
    <property type="evidence" value="ECO:0007669"/>
    <property type="project" value="UniProtKB-KW"/>
</dbReference>
<dbReference type="GO" id="GO:0019253">
    <property type="term" value="P:reductive pentose-phosphate cycle"/>
    <property type="evidence" value="ECO:0007669"/>
    <property type="project" value="UniProtKB-UniRule"/>
</dbReference>
<dbReference type="CDD" id="cd08212">
    <property type="entry name" value="RuBisCO_large_I"/>
    <property type="match status" value="1"/>
</dbReference>
<dbReference type="FunFam" id="3.20.20.110:FF:000001">
    <property type="entry name" value="Ribulose bisphosphate carboxylase large chain"/>
    <property type="match status" value="1"/>
</dbReference>
<dbReference type="FunFam" id="3.30.70.150:FF:000001">
    <property type="entry name" value="Ribulose bisphosphate carboxylase large chain"/>
    <property type="match status" value="1"/>
</dbReference>
<dbReference type="Gene3D" id="3.20.20.110">
    <property type="entry name" value="Ribulose bisphosphate carboxylase, large subunit, C-terminal domain"/>
    <property type="match status" value="1"/>
</dbReference>
<dbReference type="Gene3D" id="3.30.70.150">
    <property type="entry name" value="RuBisCO large subunit, N-terminal domain"/>
    <property type="match status" value="1"/>
</dbReference>
<dbReference type="HAMAP" id="MF_01338">
    <property type="entry name" value="RuBisCO_L_type1"/>
    <property type="match status" value="1"/>
</dbReference>
<dbReference type="InterPro" id="IPR033966">
    <property type="entry name" value="RuBisCO"/>
</dbReference>
<dbReference type="InterPro" id="IPR020878">
    <property type="entry name" value="RuBisCo_large_chain_AS"/>
</dbReference>
<dbReference type="InterPro" id="IPR000685">
    <property type="entry name" value="RuBisCO_lsu_C"/>
</dbReference>
<dbReference type="InterPro" id="IPR036376">
    <property type="entry name" value="RuBisCO_lsu_C_sf"/>
</dbReference>
<dbReference type="InterPro" id="IPR017443">
    <property type="entry name" value="RuBisCO_lsu_fd_N"/>
</dbReference>
<dbReference type="InterPro" id="IPR036422">
    <property type="entry name" value="RuBisCO_lsu_N_sf"/>
</dbReference>
<dbReference type="InterPro" id="IPR020888">
    <property type="entry name" value="RuBisCO_lsuI"/>
</dbReference>
<dbReference type="NCBIfam" id="NF003252">
    <property type="entry name" value="PRK04208.1"/>
    <property type="match status" value="1"/>
</dbReference>
<dbReference type="PANTHER" id="PTHR42704">
    <property type="entry name" value="RIBULOSE BISPHOSPHATE CARBOXYLASE"/>
    <property type="match status" value="1"/>
</dbReference>
<dbReference type="PANTHER" id="PTHR42704:SF16">
    <property type="entry name" value="RIBULOSE BISPHOSPHATE CARBOXYLASE LARGE CHAIN"/>
    <property type="match status" value="1"/>
</dbReference>
<dbReference type="Pfam" id="PF00016">
    <property type="entry name" value="RuBisCO_large"/>
    <property type="match status" value="1"/>
</dbReference>
<dbReference type="Pfam" id="PF02788">
    <property type="entry name" value="RuBisCO_large_N"/>
    <property type="match status" value="1"/>
</dbReference>
<dbReference type="SFLD" id="SFLDG01052">
    <property type="entry name" value="RuBisCO"/>
    <property type="match status" value="1"/>
</dbReference>
<dbReference type="SFLD" id="SFLDS00014">
    <property type="entry name" value="RuBisCO"/>
    <property type="match status" value="1"/>
</dbReference>
<dbReference type="SFLD" id="SFLDG00301">
    <property type="entry name" value="RuBisCO-like_proteins"/>
    <property type="match status" value="1"/>
</dbReference>
<dbReference type="SUPFAM" id="SSF51649">
    <property type="entry name" value="RuBisCo, C-terminal domain"/>
    <property type="match status" value="1"/>
</dbReference>
<dbReference type="SUPFAM" id="SSF54966">
    <property type="entry name" value="RuBisCO, large subunit, small (N-terminal) domain"/>
    <property type="match status" value="1"/>
</dbReference>
<dbReference type="PROSITE" id="PS00157">
    <property type="entry name" value="RUBISCO_LARGE"/>
    <property type="match status" value="1"/>
</dbReference>
<accession>P00875</accession>
<accession>Q9M3L8</accession>
<keyword id="KW-0002">3D-structure</keyword>
<keyword id="KW-0007">Acetylation</keyword>
<keyword id="KW-0113">Calvin cycle</keyword>
<keyword id="KW-0120">Carbon dioxide fixation</keyword>
<keyword id="KW-0150">Chloroplast</keyword>
<keyword id="KW-0903">Direct protein sequencing</keyword>
<keyword id="KW-1015">Disulfide bond</keyword>
<keyword id="KW-0456">Lyase</keyword>
<keyword id="KW-0460">Magnesium</keyword>
<keyword id="KW-0479">Metal-binding</keyword>
<keyword id="KW-0503">Monooxygenase</keyword>
<keyword id="KW-0560">Oxidoreductase</keyword>
<keyword id="KW-0601">Photorespiration</keyword>
<keyword id="KW-0602">Photosynthesis</keyword>
<keyword id="KW-0934">Plastid</keyword>
<keyword id="KW-1185">Reference proteome</keyword>